<name>SYN_VIBPA</name>
<proteinExistence type="inferred from homology"/>
<organism>
    <name type="scientific">Vibrio parahaemolyticus serotype O3:K6 (strain RIMD 2210633)</name>
    <dbReference type="NCBI Taxonomy" id="223926"/>
    <lineage>
        <taxon>Bacteria</taxon>
        <taxon>Pseudomonadati</taxon>
        <taxon>Pseudomonadota</taxon>
        <taxon>Gammaproteobacteria</taxon>
        <taxon>Vibrionales</taxon>
        <taxon>Vibrionaceae</taxon>
        <taxon>Vibrio</taxon>
    </lineage>
</organism>
<evidence type="ECO:0000255" key="1">
    <source>
        <dbReference type="HAMAP-Rule" id="MF_00534"/>
    </source>
</evidence>
<comment type="catalytic activity">
    <reaction evidence="1">
        <text>tRNA(Asn) + L-asparagine + ATP = L-asparaginyl-tRNA(Asn) + AMP + diphosphate + H(+)</text>
        <dbReference type="Rhea" id="RHEA:11180"/>
        <dbReference type="Rhea" id="RHEA-COMP:9659"/>
        <dbReference type="Rhea" id="RHEA-COMP:9674"/>
        <dbReference type="ChEBI" id="CHEBI:15378"/>
        <dbReference type="ChEBI" id="CHEBI:30616"/>
        <dbReference type="ChEBI" id="CHEBI:33019"/>
        <dbReference type="ChEBI" id="CHEBI:58048"/>
        <dbReference type="ChEBI" id="CHEBI:78442"/>
        <dbReference type="ChEBI" id="CHEBI:78515"/>
        <dbReference type="ChEBI" id="CHEBI:456215"/>
        <dbReference type="EC" id="6.1.1.22"/>
    </reaction>
</comment>
<comment type="subunit">
    <text evidence="1">Homodimer.</text>
</comment>
<comment type="subcellular location">
    <subcellularLocation>
        <location evidence="1">Cytoplasm</location>
    </subcellularLocation>
</comment>
<comment type="similarity">
    <text evidence="1">Belongs to the class-II aminoacyl-tRNA synthetase family.</text>
</comment>
<sequence>MTYAPVSDVLSGKLAVDSEVTVRGWIRSRRDSKAGISFLAIYDGSCFDPIQAVVPNNLNNYDNEVLKLTTGCSVEVTGKIVESPAQGQDFELAATDVKVVGWVEDAETYPMAKTRHSIEYLREVAHLRPRTNVIGAVARVRNCLSQAIHRFYHEQGYFWVSAPLITASDAEGAGEMFRVSTLDMENLPRTDAGKVDYNEDFFGKETFLTVSGQLNAEAYACALSKVYTFGPTFRAENSNTSRHLAEFWMVEPEVAFAELDDVAKLAEDMLKYVFKAVLEERRDDLEFFAQRIDKQAITRLEQFVSSDFAQVDYTDAIQILLDSGREFEFPVEWGIDMSSEHERFLAEEHFKAPVIVKNYPKDIKAFYMRMNDDGKTVAAMDVLAPGIGEIIGGSQREERLDVLDARMREMGIDPEHMSWYRDLRRYGTVPHAGFGLGFERLVSYVTGMGNVRDVIPFPRTPRSANF</sequence>
<accession>Q87NH5</accession>
<feature type="chain" id="PRO_0000176475" description="Asparagine--tRNA ligase">
    <location>
        <begin position="1"/>
        <end position="466"/>
    </location>
</feature>
<protein>
    <recommendedName>
        <fullName evidence="1">Asparagine--tRNA ligase</fullName>
        <ecNumber evidence="1">6.1.1.22</ecNumber>
    </recommendedName>
    <alternativeName>
        <fullName evidence="1">Asparaginyl-tRNA synthetase</fullName>
        <shortName evidence="1">AsnRS</shortName>
    </alternativeName>
</protein>
<dbReference type="EC" id="6.1.1.22" evidence="1"/>
<dbReference type="EMBL" id="BA000031">
    <property type="protein sequence ID" value="BAC60156.1"/>
    <property type="molecule type" value="Genomic_DNA"/>
</dbReference>
<dbReference type="RefSeq" id="NP_798272.1">
    <property type="nucleotide sequence ID" value="NC_004603.1"/>
</dbReference>
<dbReference type="RefSeq" id="WP_005458036.1">
    <property type="nucleotide sequence ID" value="NC_004603.1"/>
</dbReference>
<dbReference type="SMR" id="Q87NH5"/>
<dbReference type="GeneID" id="1189400"/>
<dbReference type="KEGG" id="vpa:VP1893"/>
<dbReference type="PATRIC" id="fig|223926.6.peg.1810"/>
<dbReference type="eggNOG" id="COG0017">
    <property type="taxonomic scope" value="Bacteria"/>
</dbReference>
<dbReference type="HOGENOM" id="CLU_004553_2_0_6"/>
<dbReference type="Proteomes" id="UP000002493">
    <property type="component" value="Chromosome 1"/>
</dbReference>
<dbReference type="GO" id="GO:0005737">
    <property type="term" value="C:cytoplasm"/>
    <property type="evidence" value="ECO:0007669"/>
    <property type="project" value="UniProtKB-SubCell"/>
</dbReference>
<dbReference type="GO" id="GO:0004816">
    <property type="term" value="F:asparagine-tRNA ligase activity"/>
    <property type="evidence" value="ECO:0007669"/>
    <property type="project" value="UniProtKB-UniRule"/>
</dbReference>
<dbReference type="GO" id="GO:0005524">
    <property type="term" value="F:ATP binding"/>
    <property type="evidence" value="ECO:0007669"/>
    <property type="project" value="UniProtKB-UniRule"/>
</dbReference>
<dbReference type="GO" id="GO:0003676">
    <property type="term" value="F:nucleic acid binding"/>
    <property type="evidence" value="ECO:0007669"/>
    <property type="project" value="InterPro"/>
</dbReference>
<dbReference type="GO" id="GO:0006421">
    <property type="term" value="P:asparaginyl-tRNA aminoacylation"/>
    <property type="evidence" value="ECO:0007669"/>
    <property type="project" value="UniProtKB-UniRule"/>
</dbReference>
<dbReference type="CDD" id="cd00776">
    <property type="entry name" value="AsxRS_core"/>
    <property type="match status" value="1"/>
</dbReference>
<dbReference type="CDD" id="cd04318">
    <property type="entry name" value="EcAsnRS_like_N"/>
    <property type="match status" value="1"/>
</dbReference>
<dbReference type="FunFam" id="3.30.930.10:FF:000016">
    <property type="entry name" value="Asparagine--tRNA ligase"/>
    <property type="match status" value="1"/>
</dbReference>
<dbReference type="Gene3D" id="3.30.930.10">
    <property type="entry name" value="Bira Bifunctional Protein, Domain 2"/>
    <property type="match status" value="1"/>
</dbReference>
<dbReference type="Gene3D" id="2.40.50.140">
    <property type="entry name" value="Nucleic acid-binding proteins"/>
    <property type="match status" value="1"/>
</dbReference>
<dbReference type="HAMAP" id="MF_00534">
    <property type="entry name" value="Asn_tRNA_synth"/>
    <property type="match status" value="1"/>
</dbReference>
<dbReference type="InterPro" id="IPR004364">
    <property type="entry name" value="Aa-tRNA-synt_II"/>
</dbReference>
<dbReference type="InterPro" id="IPR006195">
    <property type="entry name" value="aa-tRNA-synth_II"/>
</dbReference>
<dbReference type="InterPro" id="IPR045864">
    <property type="entry name" value="aa-tRNA-synth_II/BPL/LPL"/>
</dbReference>
<dbReference type="InterPro" id="IPR004522">
    <property type="entry name" value="Asn-tRNA-ligase"/>
</dbReference>
<dbReference type="InterPro" id="IPR002312">
    <property type="entry name" value="Asp/Asn-tRNA-synth_IIb"/>
</dbReference>
<dbReference type="InterPro" id="IPR012340">
    <property type="entry name" value="NA-bd_OB-fold"/>
</dbReference>
<dbReference type="InterPro" id="IPR004365">
    <property type="entry name" value="NA-bd_OB_tRNA"/>
</dbReference>
<dbReference type="NCBIfam" id="TIGR00457">
    <property type="entry name" value="asnS"/>
    <property type="match status" value="1"/>
</dbReference>
<dbReference type="NCBIfam" id="NF003037">
    <property type="entry name" value="PRK03932.1"/>
    <property type="match status" value="1"/>
</dbReference>
<dbReference type="PANTHER" id="PTHR22594:SF34">
    <property type="entry name" value="ASPARAGINE--TRNA LIGASE, MITOCHONDRIAL-RELATED"/>
    <property type="match status" value="1"/>
</dbReference>
<dbReference type="PANTHER" id="PTHR22594">
    <property type="entry name" value="ASPARTYL/LYSYL-TRNA SYNTHETASE"/>
    <property type="match status" value="1"/>
</dbReference>
<dbReference type="Pfam" id="PF00152">
    <property type="entry name" value="tRNA-synt_2"/>
    <property type="match status" value="1"/>
</dbReference>
<dbReference type="Pfam" id="PF01336">
    <property type="entry name" value="tRNA_anti-codon"/>
    <property type="match status" value="1"/>
</dbReference>
<dbReference type="PRINTS" id="PR01042">
    <property type="entry name" value="TRNASYNTHASP"/>
</dbReference>
<dbReference type="SUPFAM" id="SSF55681">
    <property type="entry name" value="Class II aaRS and biotin synthetases"/>
    <property type="match status" value="1"/>
</dbReference>
<dbReference type="SUPFAM" id="SSF50249">
    <property type="entry name" value="Nucleic acid-binding proteins"/>
    <property type="match status" value="1"/>
</dbReference>
<dbReference type="PROSITE" id="PS50862">
    <property type="entry name" value="AA_TRNA_LIGASE_II"/>
    <property type="match status" value="1"/>
</dbReference>
<reference key="1">
    <citation type="journal article" date="2003" name="Lancet">
        <title>Genome sequence of Vibrio parahaemolyticus: a pathogenic mechanism distinct from that of V. cholerae.</title>
        <authorList>
            <person name="Makino K."/>
            <person name="Oshima K."/>
            <person name="Kurokawa K."/>
            <person name="Yokoyama K."/>
            <person name="Uda T."/>
            <person name="Tagomori K."/>
            <person name="Iijima Y."/>
            <person name="Najima M."/>
            <person name="Nakano M."/>
            <person name="Yamashita A."/>
            <person name="Kubota Y."/>
            <person name="Kimura S."/>
            <person name="Yasunaga T."/>
            <person name="Honda T."/>
            <person name="Shinagawa H."/>
            <person name="Hattori M."/>
            <person name="Iida T."/>
        </authorList>
    </citation>
    <scope>NUCLEOTIDE SEQUENCE [LARGE SCALE GENOMIC DNA]</scope>
    <source>
        <strain>RIMD 2210633</strain>
    </source>
</reference>
<keyword id="KW-0030">Aminoacyl-tRNA synthetase</keyword>
<keyword id="KW-0067">ATP-binding</keyword>
<keyword id="KW-0963">Cytoplasm</keyword>
<keyword id="KW-0436">Ligase</keyword>
<keyword id="KW-0547">Nucleotide-binding</keyword>
<keyword id="KW-0648">Protein biosynthesis</keyword>
<gene>
    <name evidence="1" type="primary">asnS</name>
    <name type="ordered locus">VP1893</name>
</gene>